<dbReference type="EMBL" id="CP000383">
    <property type="protein sequence ID" value="ABG57936.1"/>
    <property type="molecule type" value="Genomic_DNA"/>
</dbReference>
<dbReference type="RefSeq" id="WP_011584052.1">
    <property type="nucleotide sequence ID" value="NC_008255.1"/>
</dbReference>
<dbReference type="SMR" id="Q11XD0"/>
<dbReference type="STRING" id="269798.CHU_0649"/>
<dbReference type="KEGG" id="chu:CHU_0649"/>
<dbReference type="eggNOG" id="COG0267">
    <property type="taxonomic scope" value="Bacteria"/>
</dbReference>
<dbReference type="HOGENOM" id="CLU_190949_3_0_10"/>
<dbReference type="OrthoDB" id="9801333at2"/>
<dbReference type="Proteomes" id="UP000001822">
    <property type="component" value="Chromosome"/>
</dbReference>
<dbReference type="GO" id="GO:0005737">
    <property type="term" value="C:cytoplasm"/>
    <property type="evidence" value="ECO:0007669"/>
    <property type="project" value="UniProtKB-ARBA"/>
</dbReference>
<dbReference type="GO" id="GO:1990904">
    <property type="term" value="C:ribonucleoprotein complex"/>
    <property type="evidence" value="ECO:0007669"/>
    <property type="project" value="UniProtKB-KW"/>
</dbReference>
<dbReference type="GO" id="GO:0005840">
    <property type="term" value="C:ribosome"/>
    <property type="evidence" value="ECO:0007669"/>
    <property type="project" value="UniProtKB-KW"/>
</dbReference>
<dbReference type="GO" id="GO:0003735">
    <property type="term" value="F:structural constituent of ribosome"/>
    <property type="evidence" value="ECO:0007669"/>
    <property type="project" value="InterPro"/>
</dbReference>
<dbReference type="GO" id="GO:0006412">
    <property type="term" value="P:translation"/>
    <property type="evidence" value="ECO:0007669"/>
    <property type="project" value="UniProtKB-UniRule"/>
</dbReference>
<dbReference type="Gene3D" id="2.20.28.120">
    <property type="entry name" value="Ribosomal protein L33"/>
    <property type="match status" value="1"/>
</dbReference>
<dbReference type="HAMAP" id="MF_00294">
    <property type="entry name" value="Ribosomal_bL33"/>
    <property type="match status" value="1"/>
</dbReference>
<dbReference type="InterPro" id="IPR001705">
    <property type="entry name" value="Ribosomal_bL33"/>
</dbReference>
<dbReference type="InterPro" id="IPR038584">
    <property type="entry name" value="Ribosomal_bL33_sf"/>
</dbReference>
<dbReference type="InterPro" id="IPR011332">
    <property type="entry name" value="Ribosomal_zn-bd"/>
</dbReference>
<dbReference type="NCBIfam" id="NF001764">
    <property type="entry name" value="PRK00504.1"/>
    <property type="match status" value="1"/>
</dbReference>
<dbReference type="NCBIfam" id="NF001860">
    <property type="entry name" value="PRK00595.1"/>
    <property type="match status" value="1"/>
</dbReference>
<dbReference type="NCBIfam" id="TIGR01023">
    <property type="entry name" value="rpmG_bact"/>
    <property type="match status" value="1"/>
</dbReference>
<dbReference type="PANTHER" id="PTHR43168">
    <property type="entry name" value="50S RIBOSOMAL PROTEIN L33, CHLOROPLASTIC"/>
    <property type="match status" value="1"/>
</dbReference>
<dbReference type="PANTHER" id="PTHR43168:SF2">
    <property type="entry name" value="LARGE RIBOSOMAL SUBUNIT PROTEIN BL33C"/>
    <property type="match status" value="1"/>
</dbReference>
<dbReference type="Pfam" id="PF00471">
    <property type="entry name" value="Ribosomal_L33"/>
    <property type="match status" value="1"/>
</dbReference>
<dbReference type="SUPFAM" id="SSF57829">
    <property type="entry name" value="Zn-binding ribosomal proteins"/>
    <property type="match status" value="1"/>
</dbReference>
<reference key="1">
    <citation type="journal article" date="2007" name="Appl. Environ. Microbiol.">
        <title>Genome sequence of the cellulolytic gliding bacterium Cytophaga hutchinsonii.</title>
        <authorList>
            <person name="Xie G."/>
            <person name="Bruce D.C."/>
            <person name="Challacombe J.F."/>
            <person name="Chertkov O."/>
            <person name="Detter J.C."/>
            <person name="Gilna P."/>
            <person name="Han C.S."/>
            <person name="Lucas S."/>
            <person name="Misra M."/>
            <person name="Myers G.L."/>
            <person name="Richardson P."/>
            <person name="Tapia R."/>
            <person name="Thayer N."/>
            <person name="Thompson L.S."/>
            <person name="Brettin T.S."/>
            <person name="Henrissat B."/>
            <person name="Wilson D.B."/>
            <person name="McBride M.J."/>
        </authorList>
    </citation>
    <scope>NUCLEOTIDE SEQUENCE [LARGE SCALE GENOMIC DNA]</scope>
    <source>
        <strain>ATCC 33406 / DSM 1761 / JCM 20678 / CIP 103989 / IAM 12607 / NBRC 15051 / NCIMB 9469 / D465</strain>
    </source>
</reference>
<comment type="similarity">
    <text evidence="1">Belongs to the bacterial ribosomal protein bL33 family.</text>
</comment>
<name>RL33_CYTH3</name>
<gene>
    <name evidence="1" type="primary">rpmG</name>
    <name type="ordered locus">CHU_0649</name>
</gene>
<evidence type="ECO:0000255" key="1">
    <source>
        <dbReference type="HAMAP-Rule" id="MF_00294"/>
    </source>
</evidence>
<evidence type="ECO:0000305" key="2"/>
<proteinExistence type="inferred from homology"/>
<sequence>MAKKGNRIQVILECTEHKATGLAGTSRHITTKNRKNTPERIELKKYNSVLKKYTIHKEIK</sequence>
<feature type="chain" id="PRO_1000059272" description="Large ribosomal subunit protein bL33">
    <location>
        <begin position="1"/>
        <end position="60"/>
    </location>
</feature>
<organism>
    <name type="scientific">Cytophaga hutchinsonii (strain ATCC 33406 / DSM 1761 / CIP 103989 / NBRC 15051 / NCIMB 9469 / D465)</name>
    <dbReference type="NCBI Taxonomy" id="269798"/>
    <lineage>
        <taxon>Bacteria</taxon>
        <taxon>Pseudomonadati</taxon>
        <taxon>Bacteroidota</taxon>
        <taxon>Cytophagia</taxon>
        <taxon>Cytophagales</taxon>
        <taxon>Cytophagaceae</taxon>
        <taxon>Cytophaga</taxon>
    </lineage>
</organism>
<accession>Q11XD0</accession>
<keyword id="KW-1185">Reference proteome</keyword>
<keyword id="KW-0687">Ribonucleoprotein</keyword>
<keyword id="KW-0689">Ribosomal protein</keyword>
<protein>
    <recommendedName>
        <fullName evidence="1">Large ribosomal subunit protein bL33</fullName>
    </recommendedName>
    <alternativeName>
        <fullName evidence="2">50S ribosomal protein L33</fullName>
    </alternativeName>
</protein>